<sequence length="741" mass="83217">MAAKDDLILTIDSDGDEIVYSEESEAEVEISVKKVKNKKNKKSKAQPQQKEEDEEKNEDINPNFIFSLDGIETTSKFDGWDFSVDRNANEVANKEVDLDGILRRKGGLVSLAGSDAQKEEEVEDEEEEENDEDIQNEDEDEGEEELALDGFGMGAEEKVIDEEDEEDEEDENDKSDGEDDKDTEVEVSEEGEEENDEDTAEAMAEFYADEKETKSAKSQVHTTFQTLQLSRPVLKGLSQLGYTKPSPIQSASIPIALLGRDIVAGAVTGSGKTAAYMIPIIERLLYKPSKVASTRVIVLTPTRELAIQVGDVGKKIGQFVNNLNFGLAVGGLNLRQQEQQLKSRPDVVIATPGRLIDHIRNSPSFSIDSLEVLVIDEADRMLDEGFQVELTEILSLIPKNKRQTLLFSATMNTKIQDLIQLSLQRPVRIMIDPPKTAATKLTQEFVRIRKRDHLKPALLFQLLKKLDPAQQSRIVVFVSRKESAHKLRIVLGLLGMKVSELHGSLTQEQRLNNVNDFKKLIVPVLICTDLAARGLDIPKIEIVINYDMPKSHEVYLHRVGRTARAGRDGTSISFVGESTSDRNIVKDAIKSLEGGEVKGKAVSRNIDWVDVEQLNKIVESKQEIIEEVLDEEKQAKEILQAEMQLAKASNMMKHEKEIQSRPKRTWFESEKDKKKHQTEVMQQLTKHGKKVNSKKRKAIEVKKDDGGRSYKKTKVDRITDQKRNPKAKIGNGSSKGGKRRK</sequence>
<protein>
    <recommendedName>
        <fullName>ATP-dependent RNA helicase DRS1</fullName>
        <ecNumber>3.6.4.13</ecNumber>
    </recommendedName>
</protein>
<organism>
    <name type="scientific">Scheffersomyces stipitis (strain ATCC 58785 / CBS 6054 / NBRC 10063 / NRRL Y-11545)</name>
    <name type="common">Yeast</name>
    <name type="synonym">Pichia stipitis</name>
    <dbReference type="NCBI Taxonomy" id="322104"/>
    <lineage>
        <taxon>Eukaryota</taxon>
        <taxon>Fungi</taxon>
        <taxon>Dikarya</taxon>
        <taxon>Ascomycota</taxon>
        <taxon>Saccharomycotina</taxon>
        <taxon>Pichiomycetes</taxon>
        <taxon>Debaryomycetaceae</taxon>
        <taxon>Scheffersomyces</taxon>
    </lineage>
</organism>
<feature type="chain" id="PRO_0000285146" description="ATP-dependent RNA helicase DRS1">
    <location>
        <begin position="1"/>
        <end position="741"/>
    </location>
</feature>
<feature type="domain" description="Helicase ATP-binding" evidence="3">
    <location>
        <begin position="253"/>
        <end position="429"/>
    </location>
</feature>
<feature type="domain" description="Helicase C-terminal" evidence="4">
    <location>
        <begin position="458"/>
        <end position="603"/>
    </location>
</feature>
<feature type="region of interest" description="Disordered" evidence="5">
    <location>
        <begin position="35"/>
        <end position="63"/>
    </location>
</feature>
<feature type="region of interest" description="Disordered" evidence="5">
    <location>
        <begin position="106"/>
        <end position="200"/>
    </location>
</feature>
<feature type="region of interest" description="Disordered" evidence="5">
    <location>
        <begin position="650"/>
        <end position="741"/>
    </location>
</feature>
<feature type="coiled-coil region" evidence="2">
    <location>
        <begin position="610"/>
        <end position="657"/>
    </location>
</feature>
<feature type="short sequence motif" description="Q motif">
    <location>
        <begin position="222"/>
        <end position="250"/>
    </location>
</feature>
<feature type="short sequence motif" description="DEAD box">
    <location>
        <begin position="376"/>
        <end position="379"/>
    </location>
</feature>
<feature type="compositionally biased region" description="Basic residues" evidence="5">
    <location>
        <begin position="35"/>
        <end position="44"/>
    </location>
</feature>
<feature type="compositionally biased region" description="Acidic residues" evidence="5">
    <location>
        <begin position="118"/>
        <end position="147"/>
    </location>
</feature>
<feature type="compositionally biased region" description="Acidic residues" evidence="5">
    <location>
        <begin position="159"/>
        <end position="200"/>
    </location>
</feature>
<feature type="compositionally biased region" description="Basic and acidic residues" evidence="5">
    <location>
        <begin position="652"/>
        <end position="672"/>
    </location>
</feature>
<feature type="compositionally biased region" description="Basic residues" evidence="5">
    <location>
        <begin position="686"/>
        <end position="697"/>
    </location>
</feature>
<feature type="compositionally biased region" description="Basic and acidic residues" evidence="5">
    <location>
        <begin position="698"/>
        <end position="723"/>
    </location>
</feature>
<feature type="binding site" evidence="3">
    <location>
        <begin position="266"/>
        <end position="273"/>
    </location>
    <ligand>
        <name>ATP</name>
        <dbReference type="ChEBI" id="CHEBI:30616"/>
    </ligand>
</feature>
<reference key="1">
    <citation type="journal article" date="2007" name="Nat. Biotechnol.">
        <title>Genome sequence of the lignocellulose-bioconverting and xylose-fermenting yeast Pichia stipitis.</title>
        <authorList>
            <person name="Jeffries T.W."/>
            <person name="Grigoriev I.V."/>
            <person name="Grimwood J."/>
            <person name="Laplaza J.M."/>
            <person name="Aerts A."/>
            <person name="Salamov A."/>
            <person name="Schmutz J."/>
            <person name="Lindquist E."/>
            <person name="Dehal P."/>
            <person name="Shapiro H."/>
            <person name="Jin Y.-S."/>
            <person name="Passoth V."/>
            <person name="Richardson P.M."/>
        </authorList>
    </citation>
    <scope>NUCLEOTIDE SEQUENCE [LARGE SCALE GENOMIC DNA]</scope>
    <source>
        <strain>ATCC 58785 / CBS 6054 / NBRC 10063 / NRRL Y-11545</strain>
    </source>
</reference>
<accession>A3LSN3</accession>
<comment type="function">
    <text evidence="1">ATP-binding RNA helicase involved in ribosome assembly.</text>
</comment>
<comment type="catalytic activity">
    <reaction>
        <text>ATP + H2O = ADP + phosphate + H(+)</text>
        <dbReference type="Rhea" id="RHEA:13065"/>
        <dbReference type="ChEBI" id="CHEBI:15377"/>
        <dbReference type="ChEBI" id="CHEBI:15378"/>
        <dbReference type="ChEBI" id="CHEBI:30616"/>
        <dbReference type="ChEBI" id="CHEBI:43474"/>
        <dbReference type="ChEBI" id="CHEBI:456216"/>
        <dbReference type="EC" id="3.6.4.13"/>
    </reaction>
</comment>
<comment type="subunit">
    <text evidence="1">Associates with pre-ribosomal particles.</text>
</comment>
<comment type="subcellular location">
    <subcellularLocation>
        <location evidence="1">Nucleus</location>
        <location evidence="1">Nucleolus</location>
    </subcellularLocation>
</comment>
<comment type="domain">
    <text>The Q motif is unique to and characteristic of the DEAD box family of RNA helicases and controls ATP binding and hydrolysis.</text>
</comment>
<comment type="similarity">
    <text evidence="6">Belongs to the DEAD box helicase family. DDX27/DRS1 subfamily.</text>
</comment>
<comment type="sequence caution" evidence="6">
    <conflict type="erroneous gene model prediction">
        <sequence resource="EMBL-CDS" id="ABN65601"/>
    </conflict>
</comment>
<evidence type="ECO:0000250" key="1"/>
<evidence type="ECO:0000255" key="2"/>
<evidence type="ECO:0000255" key="3">
    <source>
        <dbReference type="PROSITE-ProRule" id="PRU00541"/>
    </source>
</evidence>
<evidence type="ECO:0000255" key="4">
    <source>
        <dbReference type="PROSITE-ProRule" id="PRU00542"/>
    </source>
</evidence>
<evidence type="ECO:0000256" key="5">
    <source>
        <dbReference type="SAM" id="MobiDB-lite"/>
    </source>
</evidence>
<evidence type="ECO:0000305" key="6"/>
<keyword id="KW-0067">ATP-binding</keyword>
<keyword id="KW-0175">Coiled coil</keyword>
<keyword id="KW-0347">Helicase</keyword>
<keyword id="KW-0378">Hydrolase</keyword>
<keyword id="KW-0547">Nucleotide-binding</keyword>
<keyword id="KW-0539">Nucleus</keyword>
<keyword id="KW-1185">Reference proteome</keyword>
<keyword id="KW-0690">Ribosome biogenesis</keyword>
<keyword id="KW-0694">RNA-binding</keyword>
<proteinExistence type="inferred from homology"/>
<name>DRS1_PICST</name>
<dbReference type="EC" id="3.6.4.13"/>
<dbReference type="EMBL" id="CP000497">
    <property type="protein sequence ID" value="ABN65601.2"/>
    <property type="status" value="ALT_SEQ"/>
    <property type="molecule type" value="Genomic_DNA"/>
</dbReference>
<dbReference type="RefSeq" id="XP_001383630.2">
    <property type="nucleotide sequence ID" value="XM_001383593.1"/>
</dbReference>
<dbReference type="SMR" id="A3LSN3"/>
<dbReference type="FunCoup" id="A3LSN3">
    <property type="interactions" value="949"/>
</dbReference>
<dbReference type="STRING" id="322104.A3LSN3"/>
<dbReference type="GeneID" id="4838308"/>
<dbReference type="KEGG" id="pic:PICST_1703"/>
<dbReference type="eggNOG" id="KOG0338">
    <property type="taxonomic scope" value="Eukaryota"/>
</dbReference>
<dbReference type="HOGENOM" id="CLU_003041_3_2_1"/>
<dbReference type="InParanoid" id="A3LSN3"/>
<dbReference type="OrthoDB" id="10259843at2759"/>
<dbReference type="Proteomes" id="UP000002258">
    <property type="component" value="Chromosome 3"/>
</dbReference>
<dbReference type="GO" id="GO:0005829">
    <property type="term" value="C:cytosol"/>
    <property type="evidence" value="ECO:0007669"/>
    <property type="project" value="TreeGrafter"/>
</dbReference>
<dbReference type="GO" id="GO:0005730">
    <property type="term" value="C:nucleolus"/>
    <property type="evidence" value="ECO:0007669"/>
    <property type="project" value="UniProtKB-SubCell"/>
</dbReference>
<dbReference type="GO" id="GO:0005524">
    <property type="term" value="F:ATP binding"/>
    <property type="evidence" value="ECO:0007669"/>
    <property type="project" value="UniProtKB-KW"/>
</dbReference>
<dbReference type="GO" id="GO:0016887">
    <property type="term" value="F:ATP hydrolysis activity"/>
    <property type="evidence" value="ECO:0007669"/>
    <property type="project" value="RHEA"/>
</dbReference>
<dbReference type="GO" id="GO:0003723">
    <property type="term" value="F:RNA binding"/>
    <property type="evidence" value="ECO:0007669"/>
    <property type="project" value="UniProtKB-KW"/>
</dbReference>
<dbReference type="GO" id="GO:0003724">
    <property type="term" value="F:RNA helicase activity"/>
    <property type="evidence" value="ECO:0007669"/>
    <property type="project" value="UniProtKB-EC"/>
</dbReference>
<dbReference type="GO" id="GO:0006364">
    <property type="term" value="P:rRNA processing"/>
    <property type="evidence" value="ECO:0007669"/>
    <property type="project" value="UniProtKB-ARBA"/>
</dbReference>
<dbReference type="CDD" id="cd17947">
    <property type="entry name" value="DEADc_DDX27"/>
    <property type="match status" value="1"/>
</dbReference>
<dbReference type="CDD" id="cd18787">
    <property type="entry name" value="SF2_C_DEAD"/>
    <property type="match status" value="1"/>
</dbReference>
<dbReference type="FunFam" id="3.40.50.300:FF:000842">
    <property type="entry name" value="ATP-dependent RNA helicase DRS1"/>
    <property type="match status" value="1"/>
</dbReference>
<dbReference type="Gene3D" id="3.40.50.300">
    <property type="entry name" value="P-loop containing nucleotide triphosphate hydrolases"/>
    <property type="match status" value="2"/>
</dbReference>
<dbReference type="InterPro" id="IPR011545">
    <property type="entry name" value="DEAD/DEAH_box_helicase_dom"/>
</dbReference>
<dbReference type="InterPro" id="IPR050079">
    <property type="entry name" value="DEAD_box_RNA_helicase"/>
</dbReference>
<dbReference type="InterPro" id="IPR014001">
    <property type="entry name" value="Helicase_ATP-bd"/>
</dbReference>
<dbReference type="InterPro" id="IPR001650">
    <property type="entry name" value="Helicase_C-like"/>
</dbReference>
<dbReference type="InterPro" id="IPR027417">
    <property type="entry name" value="P-loop_NTPase"/>
</dbReference>
<dbReference type="InterPro" id="IPR000629">
    <property type="entry name" value="RNA-helicase_DEAD-box_CS"/>
</dbReference>
<dbReference type="InterPro" id="IPR014014">
    <property type="entry name" value="RNA_helicase_DEAD_Q_motif"/>
</dbReference>
<dbReference type="PANTHER" id="PTHR47959:SF1">
    <property type="entry name" value="ATP-DEPENDENT RNA HELICASE DBPA"/>
    <property type="match status" value="1"/>
</dbReference>
<dbReference type="PANTHER" id="PTHR47959">
    <property type="entry name" value="ATP-DEPENDENT RNA HELICASE RHLE-RELATED"/>
    <property type="match status" value="1"/>
</dbReference>
<dbReference type="Pfam" id="PF00270">
    <property type="entry name" value="DEAD"/>
    <property type="match status" value="1"/>
</dbReference>
<dbReference type="Pfam" id="PF00271">
    <property type="entry name" value="Helicase_C"/>
    <property type="match status" value="1"/>
</dbReference>
<dbReference type="SMART" id="SM00487">
    <property type="entry name" value="DEXDc"/>
    <property type="match status" value="1"/>
</dbReference>
<dbReference type="SMART" id="SM00490">
    <property type="entry name" value="HELICc"/>
    <property type="match status" value="1"/>
</dbReference>
<dbReference type="SUPFAM" id="SSF52540">
    <property type="entry name" value="P-loop containing nucleoside triphosphate hydrolases"/>
    <property type="match status" value="1"/>
</dbReference>
<dbReference type="PROSITE" id="PS00039">
    <property type="entry name" value="DEAD_ATP_HELICASE"/>
    <property type="match status" value="1"/>
</dbReference>
<dbReference type="PROSITE" id="PS51192">
    <property type="entry name" value="HELICASE_ATP_BIND_1"/>
    <property type="match status" value="1"/>
</dbReference>
<dbReference type="PROSITE" id="PS51194">
    <property type="entry name" value="HELICASE_CTER"/>
    <property type="match status" value="1"/>
</dbReference>
<dbReference type="PROSITE" id="PS51195">
    <property type="entry name" value="Q_MOTIF"/>
    <property type="match status" value="1"/>
</dbReference>
<gene>
    <name type="primary">DRS1</name>
    <name type="ORF">PICST_1703</name>
</gene>